<comment type="function">
    <text evidence="1">The RuvA-RuvB-RuvC complex processes Holliday junction (HJ) DNA during genetic recombination and DNA repair, while the RuvA-RuvB complex plays an important role in the rescue of blocked DNA replication forks via replication fork reversal (RFR). RuvA specifically binds to HJ cruciform DNA, conferring on it an open structure. The RuvB hexamer acts as an ATP-dependent pump, pulling dsDNA into and through the RuvAB complex. RuvB forms 2 homohexamers on either side of HJ DNA bound by 1 or 2 RuvA tetramers; 4 subunits per hexamer contact DNA at a time. Coordinated motions by a converter formed by DNA-disengaged RuvB subunits stimulates ATP hydrolysis and nucleotide exchange. Immobilization of the converter enables RuvB to convert the ATP-contained energy into a lever motion, pulling 2 nucleotides of DNA out of the RuvA tetramer per ATP hydrolyzed, thus driving DNA branch migration. The RuvB motors rotate together with the DNA substrate, which together with the progressing nucleotide cycle form the mechanistic basis for DNA recombination by continuous HJ branch migration. Branch migration allows RuvC to scan DNA until it finds its consensus sequence, where it cleaves and resolves cruciform DNA.</text>
</comment>
<comment type="catalytic activity">
    <reaction evidence="1">
        <text>ATP + H2O = ADP + phosphate + H(+)</text>
        <dbReference type="Rhea" id="RHEA:13065"/>
        <dbReference type="ChEBI" id="CHEBI:15377"/>
        <dbReference type="ChEBI" id="CHEBI:15378"/>
        <dbReference type="ChEBI" id="CHEBI:30616"/>
        <dbReference type="ChEBI" id="CHEBI:43474"/>
        <dbReference type="ChEBI" id="CHEBI:456216"/>
    </reaction>
</comment>
<comment type="subunit">
    <text evidence="1">Homohexamer. Forms an RuvA(8)-RuvB(12)-Holliday junction (HJ) complex. HJ DNA is sandwiched between 2 RuvA tetramers; dsDNA enters through RuvA and exits via RuvB. An RuvB hexamer assembles on each DNA strand where it exits the tetramer. Each RuvB hexamer is contacted by two RuvA subunits (via domain III) on 2 adjacent RuvB subunits; this complex drives branch migration. In the full resolvosome a probable DNA-RuvA(4)-RuvB(12)-RuvC(2) complex forms which resolves the HJ.</text>
</comment>
<comment type="subcellular location">
    <subcellularLocation>
        <location evidence="1">Cytoplasm</location>
    </subcellularLocation>
</comment>
<comment type="domain">
    <text evidence="1">Has 3 domains, the large (RuvB-L) and small ATPase (RuvB-S) domains and the C-terminal head (RuvB-H) domain. The head domain binds DNA, while the ATPase domains jointly bind ATP, ADP or are empty depending on the state of the subunit in the translocation cycle. During a single DNA translocation step the structure of each domain remains the same, but their relative positions change.</text>
</comment>
<comment type="similarity">
    <text evidence="1">Belongs to the RuvB family.</text>
</comment>
<accession>C0M7R2</accession>
<keyword id="KW-0067">ATP-binding</keyword>
<keyword id="KW-0963">Cytoplasm</keyword>
<keyword id="KW-0227">DNA damage</keyword>
<keyword id="KW-0233">DNA recombination</keyword>
<keyword id="KW-0234">DNA repair</keyword>
<keyword id="KW-0238">DNA-binding</keyword>
<keyword id="KW-0378">Hydrolase</keyword>
<keyword id="KW-0547">Nucleotide-binding</keyword>
<dbReference type="EC" id="3.6.4.-" evidence="1"/>
<dbReference type="EMBL" id="FM204883">
    <property type="protein sequence ID" value="CAW91941.1"/>
    <property type="molecule type" value="Genomic_DNA"/>
</dbReference>
<dbReference type="RefSeq" id="WP_012678780.1">
    <property type="nucleotide sequence ID" value="NC_012471.1"/>
</dbReference>
<dbReference type="SMR" id="C0M7R2"/>
<dbReference type="KEGG" id="seu:SEQ_0040"/>
<dbReference type="HOGENOM" id="CLU_055599_1_0_9"/>
<dbReference type="OrthoDB" id="9804478at2"/>
<dbReference type="Proteomes" id="UP000001365">
    <property type="component" value="Chromosome"/>
</dbReference>
<dbReference type="GO" id="GO:0005737">
    <property type="term" value="C:cytoplasm"/>
    <property type="evidence" value="ECO:0007669"/>
    <property type="project" value="UniProtKB-SubCell"/>
</dbReference>
<dbReference type="GO" id="GO:0048476">
    <property type="term" value="C:Holliday junction resolvase complex"/>
    <property type="evidence" value="ECO:0007669"/>
    <property type="project" value="UniProtKB-UniRule"/>
</dbReference>
<dbReference type="GO" id="GO:0005524">
    <property type="term" value="F:ATP binding"/>
    <property type="evidence" value="ECO:0007669"/>
    <property type="project" value="UniProtKB-UniRule"/>
</dbReference>
<dbReference type="GO" id="GO:0016887">
    <property type="term" value="F:ATP hydrolysis activity"/>
    <property type="evidence" value="ECO:0007669"/>
    <property type="project" value="InterPro"/>
</dbReference>
<dbReference type="GO" id="GO:0000400">
    <property type="term" value="F:four-way junction DNA binding"/>
    <property type="evidence" value="ECO:0007669"/>
    <property type="project" value="UniProtKB-UniRule"/>
</dbReference>
<dbReference type="GO" id="GO:0009378">
    <property type="term" value="F:four-way junction helicase activity"/>
    <property type="evidence" value="ECO:0007669"/>
    <property type="project" value="InterPro"/>
</dbReference>
<dbReference type="GO" id="GO:0006310">
    <property type="term" value="P:DNA recombination"/>
    <property type="evidence" value="ECO:0007669"/>
    <property type="project" value="UniProtKB-UniRule"/>
</dbReference>
<dbReference type="GO" id="GO:0006281">
    <property type="term" value="P:DNA repair"/>
    <property type="evidence" value="ECO:0007669"/>
    <property type="project" value="UniProtKB-UniRule"/>
</dbReference>
<dbReference type="CDD" id="cd00009">
    <property type="entry name" value="AAA"/>
    <property type="match status" value="1"/>
</dbReference>
<dbReference type="Gene3D" id="1.10.8.60">
    <property type="match status" value="1"/>
</dbReference>
<dbReference type="Gene3D" id="3.40.50.300">
    <property type="entry name" value="P-loop containing nucleotide triphosphate hydrolases"/>
    <property type="match status" value="1"/>
</dbReference>
<dbReference type="Gene3D" id="1.10.10.10">
    <property type="entry name" value="Winged helix-like DNA-binding domain superfamily/Winged helix DNA-binding domain"/>
    <property type="match status" value="1"/>
</dbReference>
<dbReference type="HAMAP" id="MF_00016">
    <property type="entry name" value="DNA_HJ_migration_RuvB"/>
    <property type="match status" value="1"/>
</dbReference>
<dbReference type="InterPro" id="IPR003593">
    <property type="entry name" value="AAA+_ATPase"/>
</dbReference>
<dbReference type="InterPro" id="IPR041445">
    <property type="entry name" value="AAA_lid_4"/>
</dbReference>
<dbReference type="InterPro" id="IPR004605">
    <property type="entry name" value="DNA_helicase_Holl-junc_RuvB"/>
</dbReference>
<dbReference type="InterPro" id="IPR027417">
    <property type="entry name" value="P-loop_NTPase"/>
</dbReference>
<dbReference type="InterPro" id="IPR008824">
    <property type="entry name" value="RuvB-like_N"/>
</dbReference>
<dbReference type="InterPro" id="IPR008823">
    <property type="entry name" value="RuvB_C"/>
</dbReference>
<dbReference type="InterPro" id="IPR036388">
    <property type="entry name" value="WH-like_DNA-bd_sf"/>
</dbReference>
<dbReference type="InterPro" id="IPR036390">
    <property type="entry name" value="WH_DNA-bd_sf"/>
</dbReference>
<dbReference type="NCBIfam" id="NF000868">
    <property type="entry name" value="PRK00080.1"/>
    <property type="match status" value="1"/>
</dbReference>
<dbReference type="NCBIfam" id="TIGR00635">
    <property type="entry name" value="ruvB"/>
    <property type="match status" value="1"/>
</dbReference>
<dbReference type="PANTHER" id="PTHR42848">
    <property type="match status" value="1"/>
</dbReference>
<dbReference type="PANTHER" id="PTHR42848:SF1">
    <property type="entry name" value="HOLLIDAY JUNCTION BRANCH MIGRATION COMPLEX SUBUNIT RUVB"/>
    <property type="match status" value="1"/>
</dbReference>
<dbReference type="Pfam" id="PF17864">
    <property type="entry name" value="AAA_lid_4"/>
    <property type="match status" value="1"/>
</dbReference>
<dbReference type="Pfam" id="PF05491">
    <property type="entry name" value="RuvB_C"/>
    <property type="match status" value="1"/>
</dbReference>
<dbReference type="Pfam" id="PF05496">
    <property type="entry name" value="RuvB_N"/>
    <property type="match status" value="1"/>
</dbReference>
<dbReference type="SMART" id="SM00382">
    <property type="entry name" value="AAA"/>
    <property type="match status" value="1"/>
</dbReference>
<dbReference type="SUPFAM" id="SSF52540">
    <property type="entry name" value="P-loop containing nucleoside triphosphate hydrolases"/>
    <property type="match status" value="1"/>
</dbReference>
<dbReference type="SUPFAM" id="SSF46785">
    <property type="entry name" value="Winged helix' DNA-binding domain"/>
    <property type="match status" value="1"/>
</dbReference>
<protein>
    <recommendedName>
        <fullName evidence="1">Holliday junction branch migration complex subunit RuvB</fullName>
        <ecNumber evidence="1">3.6.4.-</ecNumber>
    </recommendedName>
</protein>
<reference key="1">
    <citation type="journal article" date="2009" name="PLoS Pathog.">
        <title>Genomic evidence for the evolution of Streptococcus equi: host restriction, increased virulence, and genetic exchange with human pathogens.</title>
        <authorList>
            <person name="Holden M.T.G."/>
            <person name="Heather Z."/>
            <person name="Paillot R."/>
            <person name="Steward K.F."/>
            <person name="Webb K."/>
            <person name="Ainslie F."/>
            <person name="Jourdan T."/>
            <person name="Bason N.C."/>
            <person name="Holroyd N.E."/>
            <person name="Mungall K."/>
            <person name="Quail M.A."/>
            <person name="Sanders M."/>
            <person name="Simmonds M."/>
            <person name="Willey D."/>
            <person name="Brooks K."/>
            <person name="Aanensen D.M."/>
            <person name="Spratt B.G."/>
            <person name="Jolley K.A."/>
            <person name="Maiden M.C.J."/>
            <person name="Kehoe M."/>
            <person name="Chanter N."/>
            <person name="Bentley S.D."/>
            <person name="Robinson C."/>
            <person name="Maskell D.J."/>
            <person name="Parkhill J."/>
            <person name="Waller A.S."/>
        </authorList>
    </citation>
    <scope>NUCLEOTIDE SEQUENCE [LARGE SCALE GENOMIC DNA]</scope>
    <source>
        <strain>4047</strain>
    </source>
</reference>
<sequence length="335" mass="37846">MTRILDNDLIGDEGSVERTLRPQYLREYIGQDRVKDQLMIFIEAAKRREESLDHVLLFGSPGLGKTTMAFVIANELGVHLKQTSGPAIEKAGDLVAILNDLEPGDVLFIDEIHRMPMAVEEILYSAMEDFYIDIMIGAGDTSRSVHLELPPFTLIGATTRAGMLSNPLRARFGITGHMEYYQTADLTEIVERTADIFDMTIKHEAAYELARRSRGTPRIANRLLKRVRDYAQIMGDGMITTQITDKALTMLDVDQEGLDYVDQKILRTMIEVYQGGPVGLGTLSVNIAEERDTVEDMYEPYLIQKGFIMRTRTGRVVTEKAYQHLGYPYEKTIKT</sequence>
<evidence type="ECO:0000255" key="1">
    <source>
        <dbReference type="HAMAP-Rule" id="MF_00016"/>
    </source>
</evidence>
<name>RUVB_STRE4</name>
<proteinExistence type="inferred from homology"/>
<gene>
    <name evidence="1" type="primary">ruvB</name>
    <name type="ordered locus">SEQ_0040</name>
</gene>
<feature type="chain" id="PRO_1000116657" description="Holliday junction branch migration complex subunit RuvB">
    <location>
        <begin position="1"/>
        <end position="335"/>
    </location>
</feature>
<feature type="region of interest" description="Large ATPase domain (RuvB-L)" evidence="1">
    <location>
        <begin position="1"/>
        <end position="181"/>
    </location>
</feature>
<feature type="region of interest" description="Small ATPAse domain (RuvB-S)" evidence="1">
    <location>
        <begin position="182"/>
        <end position="252"/>
    </location>
</feature>
<feature type="region of interest" description="Head domain (RuvB-H)" evidence="1">
    <location>
        <begin position="255"/>
        <end position="335"/>
    </location>
</feature>
<feature type="binding site" evidence="1">
    <location>
        <position position="20"/>
    </location>
    <ligand>
        <name>ATP</name>
        <dbReference type="ChEBI" id="CHEBI:30616"/>
    </ligand>
</feature>
<feature type="binding site" evidence="1">
    <location>
        <position position="21"/>
    </location>
    <ligand>
        <name>ATP</name>
        <dbReference type="ChEBI" id="CHEBI:30616"/>
    </ligand>
</feature>
<feature type="binding site" evidence="1">
    <location>
        <position position="62"/>
    </location>
    <ligand>
        <name>ATP</name>
        <dbReference type="ChEBI" id="CHEBI:30616"/>
    </ligand>
</feature>
<feature type="binding site" evidence="1">
    <location>
        <position position="65"/>
    </location>
    <ligand>
        <name>ATP</name>
        <dbReference type="ChEBI" id="CHEBI:30616"/>
    </ligand>
</feature>
<feature type="binding site" evidence="1">
    <location>
        <position position="66"/>
    </location>
    <ligand>
        <name>ATP</name>
        <dbReference type="ChEBI" id="CHEBI:30616"/>
    </ligand>
</feature>
<feature type="binding site" evidence="1">
    <location>
        <position position="66"/>
    </location>
    <ligand>
        <name>Mg(2+)</name>
        <dbReference type="ChEBI" id="CHEBI:18420"/>
    </ligand>
</feature>
<feature type="binding site" evidence="1">
    <location>
        <position position="67"/>
    </location>
    <ligand>
        <name>ATP</name>
        <dbReference type="ChEBI" id="CHEBI:30616"/>
    </ligand>
</feature>
<feature type="binding site" evidence="1">
    <location>
        <begin position="128"/>
        <end position="130"/>
    </location>
    <ligand>
        <name>ATP</name>
        <dbReference type="ChEBI" id="CHEBI:30616"/>
    </ligand>
</feature>
<feature type="binding site" evidence="1">
    <location>
        <position position="171"/>
    </location>
    <ligand>
        <name>ATP</name>
        <dbReference type="ChEBI" id="CHEBI:30616"/>
    </ligand>
</feature>
<feature type="binding site" evidence="1">
    <location>
        <position position="181"/>
    </location>
    <ligand>
        <name>ATP</name>
        <dbReference type="ChEBI" id="CHEBI:30616"/>
    </ligand>
</feature>
<feature type="binding site" evidence="1">
    <location>
        <position position="218"/>
    </location>
    <ligand>
        <name>ATP</name>
        <dbReference type="ChEBI" id="CHEBI:30616"/>
    </ligand>
</feature>
<feature type="binding site" evidence="1">
    <location>
        <position position="291"/>
    </location>
    <ligand>
        <name>DNA</name>
        <dbReference type="ChEBI" id="CHEBI:16991"/>
    </ligand>
</feature>
<feature type="binding site" evidence="1">
    <location>
        <position position="310"/>
    </location>
    <ligand>
        <name>DNA</name>
        <dbReference type="ChEBI" id="CHEBI:16991"/>
    </ligand>
</feature>
<feature type="binding site" evidence="1">
    <location>
        <position position="312"/>
    </location>
    <ligand>
        <name>DNA</name>
        <dbReference type="ChEBI" id="CHEBI:16991"/>
    </ligand>
</feature>
<feature type="binding site" evidence="1">
    <location>
        <position position="315"/>
    </location>
    <ligand>
        <name>DNA</name>
        <dbReference type="ChEBI" id="CHEBI:16991"/>
    </ligand>
</feature>
<organism>
    <name type="scientific">Streptococcus equi subsp. equi (strain 4047)</name>
    <dbReference type="NCBI Taxonomy" id="553482"/>
    <lineage>
        <taxon>Bacteria</taxon>
        <taxon>Bacillati</taxon>
        <taxon>Bacillota</taxon>
        <taxon>Bacilli</taxon>
        <taxon>Lactobacillales</taxon>
        <taxon>Streptococcaceae</taxon>
        <taxon>Streptococcus</taxon>
    </lineage>
</organism>